<organism>
    <name type="scientific">Homo sapiens</name>
    <name type="common">Human</name>
    <dbReference type="NCBI Taxonomy" id="9606"/>
    <lineage>
        <taxon>Eukaryota</taxon>
        <taxon>Metazoa</taxon>
        <taxon>Chordata</taxon>
        <taxon>Craniata</taxon>
        <taxon>Vertebrata</taxon>
        <taxon>Euteleostomi</taxon>
        <taxon>Mammalia</taxon>
        <taxon>Eutheria</taxon>
        <taxon>Euarchontoglires</taxon>
        <taxon>Primates</taxon>
        <taxon>Haplorrhini</taxon>
        <taxon>Catarrhini</taxon>
        <taxon>Hominidae</taxon>
        <taxon>Homo</taxon>
    </lineage>
</organism>
<accession>P08217</accession>
<accession>B2R5I4</accession>
<accession>Q14243</accession>
<gene>
    <name evidence="7" type="primary">CELA2A</name>
    <name type="synonym">ELA2A</name>
</gene>
<sequence>MIRTLLLSTLVAGALSCGDPTYPPYVTRVVGGEEARPNSWPWQVSLQYSSNGKWYHTCGGSLIANSWVLTAAHCISSSRTYRVGLGRHNLYVAESGSLAVSVSKIVVHKDWNSNQISKGNDIALLKLANPVSLTDKIQLACLPPAGTILPNNYPCYVTGWGRLQTNGAVPDVLQQGRLLVVDYATCSSSAWWGSSVKTSMICAGGDGVISSCNGDSGGPLNCQASDGRWQVHGIVSFGSRLGCNYYHKPSVFTRVSNYIDWINSVIANN</sequence>
<dbReference type="EC" id="3.4.21.71"/>
<dbReference type="EMBL" id="M16631">
    <property type="protein sequence ID" value="AAA52374.1"/>
    <property type="molecule type" value="mRNA"/>
</dbReference>
<dbReference type="EMBL" id="M16652">
    <property type="protein sequence ID" value="AAA52380.1"/>
    <property type="molecule type" value="mRNA"/>
</dbReference>
<dbReference type="EMBL" id="D00236">
    <property type="protein sequence ID" value="BAA00165.1"/>
    <property type="molecule type" value="mRNA"/>
</dbReference>
<dbReference type="EMBL" id="AK312198">
    <property type="protein sequence ID" value="BAG35131.1"/>
    <property type="molecule type" value="mRNA"/>
</dbReference>
<dbReference type="EMBL" id="AK056678">
    <property type="protein sequence ID" value="BAG51782.1"/>
    <property type="molecule type" value="mRNA"/>
</dbReference>
<dbReference type="EMBL" id="AL512883">
    <property type="status" value="NOT_ANNOTATED_CDS"/>
    <property type="molecule type" value="Genomic_DNA"/>
</dbReference>
<dbReference type="EMBL" id="CH471167">
    <property type="protein sequence ID" value="EAW51727.1"/>
    <property type="molecule type" value="Genomic_DNA"/>
</dbReference>
<dbReference type="EMBL" id="BC007031">
    <property type="protein sequence ID" value="AAH07031.1"/>
    <property type="molecule type" value="mRNA"/>
</dbReference>
<dbReference type="CCDS" id="CCDS157.1"/>
<dbReference type="PIR" id="B26823">
    <property type="entry name" value="B26823"/>
</dbReference>
<dbReference type="RefSeq" id="NP_254275.1">
    <property type="nucleotide sequence ID" value="NM_033440.3"/>
</dbReference>
<dbReference type="SMR" id="P08217"/>
<dbReference type="BioGRID" id="121962">
    <property type="interactions" value="16"/>
</dbReference>
<dbReference type="FunCoup" id="P08217">
    <property type="interactions" value="203"/>
</dbReference>
<dbReference type="IntAct" id="P08217">
    <property type="interactions" value="15"/>
</dbReference>
<dbReference type="STRING" id="9606.ENSP00000352639"/>
<dbReference type="DrugBank" id="DB06901">
    <property type="generic name" value="2-(2-HYDROXY-CYCLOPENTYL)-PENT-4-ENAL"/>
</dbReference>
<dbReference type="MEROPS" id="S01.155"/>
<dbReference type="GlyGen" id="P08217">
    <property type="glycosylation" value="1 site, 1 O-linked glycan (1 site)"/>
</dbReference>
<dbReference type="iPTMnet" id="P08217"/>
<dbReference type="PhosphoSitePlus" id="P08217"/>
<dbReference type="BioMuta" id="CELA2A"/>
<dbReference type="DMDM" id="119255"/>
<dbReference type="MassIVE" id="P08217"/>
<dbReference type="PaxDb" id="9606-ENSP00000352639"/>
<dbReference type="PeptideAtlas" id="P08217"/>
<dbReference type="ProteomicsDB" id="52086"/>
<dbReference type="Antibodypedia" id="14313">
    <property type="antibodies" value="100 antibodies from 17 providers"/>
</dbReference>
<dbReference type="DNASU" id="63036"/>
<dbReference type="Ensembl" id="ENST00000359621.5">
    <property type="protein sequence ID" value="ENSP00000352639.4"/>
    <property type="gene ID" value="ENSG00000142615.8"/>
</dbReference>
<dbReference type="GeneID" id="63036"/>
<dbReference type="KEGG" id="hsa:63036"/>
<dbReference type="MANE-Select" id="ENST00000359621.5">
    <property type="protein sequence ID" value="ENSP00000352639.4"/>
    <property type="RefSeq nucleotide sequence ID" value="NM_033440.3"/>
    <property type="RefSeq protein sequence ID" value="NP_254275.1"/>
</dbReference>
<dbReference type="UCSC" id="uc001awk.4">
    <property type="organism name" value="human"/>
</dbReference>
<dbReference type="AGR" id="HGNC:24609"/>
<dbReference type="CTD" id="63036"/>
<dbReference type="DisGeNET" id="63036"/>
<dbReference type="GeneCards" id="CELA2A"/>
<dbReference type="HGNC" id="HGNC:24609">
    <property type="gene designation" value="CELA2A"/>
</dbReference>
<dbReference type="HPA" id="ENSG00000142615">
    <property type="expression patterns" value="Tissue enriched (pancreas)"/>
</dbReference>
<dbReference type="MalaCards" id="CELA2A"/>
<dbReference type="MIM" id="609443">
    <property type="type" value="gene"/>
</dbReference>
<dbReference type="MIM" id="618620">
    <property type="type" value="phenotype"/>
</dbReference>
<dbReference type="neXtProt" id="NX_P08217"/>
<dbReference type="OpenTargets" id="ENSG00000142615"/>
<dbReference type="PharmGKB" id="PA165750794"/>
<dbReference type="VEuPathDB" id="HostDB:ENSG00000142615"/>
<dbReference type="eggNOG" id="KOG3627">
    <property type="taxonomic scope" value="Eukaryota"/>
</dbReference>
<dbReference type="GeneTree" id="ENSGT01030000234528"/>
<dbReference type="HOGENOM" id="CLU_006842_0_4_1"/>
<dbReference type="InParanoid" id="P08217"/>
<dbReference type="OMA" id="GSTLGCN"/>
<dbReference type="OrthoDB" id="10061449at2759"/>
<dbReference type="PAN-GO" id="P08217">
    <property type="GO annotations" value="3 GO annotations based on evolutionary models"/>
</dbReference>
<dbReference type="PhylomeDB" id="P08217"/>
<dbReference type="TreeFam" id="TF330455"/>
<dbReference type="PathwayCommons" id="P08217"/>
<dbReference type="Reactome" id="R-HSA-6809371">
    <property type="pathway name" value="Formation of the cornified envelope"/>
</dbReference>
<dbReference type="Reactome" id="R-HSA-9925561">
    <property type="pathway name" value="Developmental Lineage of Pancreatic Acinar Cells"/>
</dbReference>
<dbReference type="BioGRID-ORCS" id="63036">
    <property type="hits" value="11 hits in 1145 CRISPR screens"/>
</dbReference>
<dbReference type="GeneWiki" id="CELA2A"/>
<dbReference type="GenomeRNAi" id="63036"/>
<dbReference type="Pharos" id="P08217">
    <property type="development level" value="Tbio"/>
</dbReference>
<dbReference type="PRO" id="PR:P08217"/>
<dbReference type="Proteomes" id="UP000005640">
    <property type="component" value="Chromosome 1"/>
</dbReference>
<dbReference type="RNAct" id="P08217">
    <property type="molecule type" value="protein"/>
</dbReference>
<dbReference type="Bgee" id="ENSG00000142615">
    <property type="expression patterns" value="Expressed in body of pancreas and 92 other cell types or tissues"/>
</dbReference>
<dbReference type="GO" id="GO:0005829">
    <property type="term" value="C:cytosol"/>
    <property type="evidence" value="ECO:0000304"/>
    <property type="project" value="Reactome"/>
</dbReference>
<dbReference type="GO" id="GO:0005576">
    <property type="term" value="C:extracellular region"/>
    <property type="evidence" value="ECO:0000314"/>
    <property type="project" value="UniProtKB"/>
</dbReference>
<dbReference type="GO" id="GO:0005615">
    <property type="term" value="C:extracellular space"/>
    <property type="evidence" value="ECO:0000318"/>
    <property type="project" value="GO_Central"/>
</dbReference>
<dbReference type="GO" id="GO:0036457">
    <property type="term" value="C:keratohyalin granule"/>
    <property type="evidence" value="ECO:0000314"/>
    <property type="project" value="MGI"/>
</dbReference>
<dbReference type="GO" id="GO:0004175">
    <property type="term" value="F:endopeptidase activity"/>
    <property type="evidence" value="ECO:0000314"/>
    <property type="project" value="UniProtKB"/>
</dbReference>
<dbReference type="GO" id="GO:0017171">
    <property type="term" value="F:serine hydrolase activity"/>
    <property type="evidence" value="ECO:0000314"/>
    <property type="project" value="MGI"/>
</dbReference>
<dbReference type="GO" id="GO:0004252">
    <property type="term" value="F:serine-type endopeptidase activity"/>
    <property type="evidence" value="ECO:0000318"/>
    <property type="project" value="GO_Central"/>
</dbReference>
<dbReference type="GO" id="GO:1901143">
    <property type="term" value="P:insulin catabolic process"/>
    <property type="evidence" value="ECO:0000314"/>
    <property type="project" value="UniProtKB"/>
</dbReference>
<dbReference type="GO" id="GO:0006508">
    <property type="term" value="P:proteolysis"/>
    <property type="evidence" value="ECO:0000318"/>
    <property type="project" value="GO_Central"/>
</dbReference>
<dbReference type="GO" id="GO:0050796">
    <property type="term" value="P:regulation of insulin secretion"/>
    <property type="evidence" value="ECO:0000314"/>
    <property type="project" value="UniProtKB"/>
</dbReference>
<dbReference type="GO" id="GO:0090330">
    <property type="term" value="P:regulation of platelet aggregation"/>
    <property type="evidence" value="ECO:0000314"/>
    <property type="project" value="UniProtKB"/>
</dbReference>
<dbReference type="GO" id="GO:0032868">
    <property type="term" value="P:response to insulin"/>
    <property type="evidence" value="ECO:0000314"/>
    <property type="project" value="UniProtKB"/>
</dbReference>
<dbReference type="CDD" id="cd00190">
    <property type="entry name" value="Tryp_SPc"/>
    <property type="match status" value="1"/>
</dbReference>
<dbReference type="FunFam" id="2.40.10.10:FF:000280">
    <property type="match status" value="1"/>
</dbReference>
<dbReference type="FunFam" id="2.40.10.10:FF:000004">
    <property type="entry name" value="Tryptase gamma 1"/>
    <property type="match status" value="1"/>
</dbReference>
<dbReference type="Gene3D" id="2.40.10.10">
    <property type="entry name" value="Trypsin-like serine proteases"/>
    <property type="match status" value="2"/>
</dbReference>
<dbReference type="InterPro" id="IPR050850">
    <property type="entry name" value="Peptidase_S1_Elastase_sf"/>
</dbReference>
<dbReference type="InterPro" id="IPR009003">
    <property type="entry name" value="Peptidase_S1_PA"/>
</dbReference>
<dbReference type="InterPro" id="IPR043504">
    <property type="entry name" value="Peptidase_S1_PA_chymotrypsin"/>
</dbReference>
<dbReference type="InterPro" id="IPR001314">
    <property type="entry name" value="Peptidase_S1A"/>
</dbReference>
<dbReference type="InterPro" id="IPR001254">
    <property type="entry name" value="Trypsin_dom"/>
</dbReference>
<dbReference type="InterPro" id="IPR018114">
    <property type="entry name" value="TRYPSIN_HIS"/>
</dbReference>
<dbReference type="InterPro" id="IPR033116">
    <property type="entry name" value="TRYPSIN_SER"/>
</dbReference>
<dbReference type="PANTHER" id="PTHR24257">
    <property type="entry name" value="CHYMOTRYPSIN-LIKE ELASTASE FAMILY MEMBER"/>
    <property type="match status" value="1"/>
</dbReference>
<dbReference type="PANTHER" id="PTHR24257:SF24">
    <property type="entry name" value="CHYMOTRYPSIN-LIKE ELASTASE FAMILY MEMBER 2A"/>
    <property type="match status" value="1"/>
</dbReference>
<dbReference type="Pfam" id="PF00089">
    <property type="entry name" value="Trypsin"/>
    <property type="match status" value="1"/>
</dbReference>
<dbReference type="PRINTS" id="PR00722">
    <property type="entry name" value="CHYMOTRYPSIN"/>
</dbReference>
<dbReference type="SMART" id="SM00020">
    <property type="entry name" value="Tryp_SPc"/>
    <property type="match status" value="1"/>
</dbReference>
<dbReference type="SUPFAM" id="SSF50494">
    <property type="entry name" value="Trypsin-like serine proteases"/>
    <property type="match status" value="1"/>
</dbReference>
<dbReference type="PROSITE" id="PS50240">
    <property type="entry name" value="TRYPSIN_DOM"/>
    <property type="match status" value="1"/>
</dbReference>
<dbReference type="PROSITE" id="PS00134">
    <property type="entry name" value="TRYPSIN_HIS"/>
    <property type="match status" value="1"/>
</dbReference>
<dbReference type="PROSITE" id="PS00135">
    <property type="entry name" value="TRYPSIN_SER"/>
    <property type="match status" value="1"/>
</dbReference>
<protein>
    <recommendedName>
        <fullName evidence="6">Chymotrypsin-like elastase family member 2A</fullName>
        <ecNumber>3.4.21.71</ecNumber>
    </recommendedName>
    <alternativeName>
        <fullName>Elastase-2A</fullName>
    </alternativeName>
</protein>
<evidence type="ECO:0000250" key="1"/>
<evidence type="ECO:0000255" key="2">
    <source>
        <dbReference type="PROSITE-ProRule" id="PRU00274"/>
    </source>
</evidence>
<evidence type="ECO:0000269" key="3">
    <source>
    </source>
</evidence>
<evidence type="ECO:0000269" key="4">
    <source>
    </source>
</evidence>
<evidence type="ECO:0000269" key="5">
    <source>
    </source>
</evidence>
<evidence type="ECO:0000305" key="6"/>
<evidence type="ECO:0000312" key="7">
    <source>
        <dbReference type="HGNC" id="HGNC:24609"/>
    </source>
</evidence>
<comment type="function">
    <text evidence="5">Elastase that enhances insulin signaling and might have a physiologic role in cellular glucose metabolism. Circulates in plasma and reduces platelet hyperactivation, triggers both insulin secretion and degradation, and increases insulin sensitivity.</text>
</comment>
<comment type="catalytic activity">
    <reaction evidence="5">
        <text>Preferential cleavage: Leu-|-Xaa, Met-|-Xaa and Phe-|-Xaa. Hydrolyzes elastin.</text>
        <dbReference type="EC" id="3.4.21.71"/>
    </reaction>
</comment>
<comment type="subunit">
    <text evidence="4 5">Interacts with CPA1. Interacts with SERPINA1 (PubMed:31358993).</text>
</comment>
<comment type="subcellular location">
    <subcellularLocation>
        <location evidence="5">Secreted</location>
    </subcellularLocation>
</comment>
<comment type="tissue specificity">
    <text evidence="3 5">Expressed in pancreas. Not detected in keratinocytes (PubMed:10620133). Detected in exocrine secretions of the pancreas (at protein level). Also expressed in a small fraction of cells in pancreatic islets, adrenal cortex, intestinal glands and colonic lymphoid follicles (at protein level) (PubMed:31358993). Detected in plasma (PubMed:31358993).</text>
</comment>
<comment type="disease" evidence="5">
    <disease id="DI-05676">
        <name>Abdominal obesity-metabolic syndrome 4</name>
        <acronym>AOMS4</acronym>
        <description>A form of abdominal obesity-metabolic syndrome, a disorder characterized by abdominal obesity, high triglycerides, low levels of high density lipoprotein cholesterol, high blood pressure, and elevated fasting glucose levels. AOMS4 is an autosomal dominant disease. Patients manifest obesity, hypertension, early-onset coronary artery disease and type 2 diabetes.</description>
        <dbReference type="MIM" id="618620"/>
    </disease>
    <text>The disease is caused by variants affecting the gene represented in this entry.</text>
</comment>
<comment type="similarity">
    <text evidence="2">Belongs to the peptidase S1 family. Elastase subfamily.</text>
</comment>
<keyword id="KW-0219">Diabetes mellitus</keyword>
<keyword id="KW-0903">Direct protein sequencing</keyword>
<keyword id="KW-0225">Disease variant</keyword>
<keyword id="KW-1015">Disulfide bond</keyword>
<keyword id="KW-0378">Hydrolase</keyword>
<keyword id="KW-0550">Obesity</keyword>
<keyword id="KW-0645">Protease</keyword>
<keyword id="KW-1267">Proteomics identification</keyword>
<keyword id="KW-1185">Reference proteome</keyword>
<keyword id="KW-0964">Secreted</keyword>
<keyword id="KW-0720">Serine protease</keyword>
<keyword id="KW-0732">Signal</keyword>
<keyword id="KW-0865">Zymogen</keyword>
<reference key="1">
    <citation type="journal article" date="1987" name="Biochemistry">
        <title>Primary structure of human pancreatic elastase 2 determined by sequence analysis of the cloned mRNA.</title>
        <authorList>
            <person name="Fletcher T.S."/>
            <person name="Shen W.F."/>
            <person name="Largman C."/>
        </authorList>
    </citation>
    <scope>NUCLEOTIDE SEQUENCE [MRNA]</scope>
</reference>
<reference key="2">
    <citation type="journal article" date="1987" name="DNA">
        <title>Characterization of pancreatic elastase II cDNAs: two elastase II mRNAs are expressed in human pancreas.</title>
        <authorList>
            <person name="Kawashima I."/>
            <person name="Tani T."/>
            <person name="Shimoda K."/>
            <person name="Takiguchi Y."/>
        </authorList>
    </citation>
    <scope>NUCLEOTIDE SEQUENCE [MRNA]</scope>
</reference>
<reference key="3">
    <citation type="journal article" date="1987" name="J. Biochem.">
        <title>Molecular cloning and expression in Escherichia coli of a cDNA encoding human pancreatic elastase 2.</title>
        <authorList>
            <person name="Shirasu Y."/>
            <person name="Yoshida H."/>
            <person name="Matsuki S."/>
            <person name="Takemura K."/>
            <person name="Ikeda N."/>
            <person name="Shimada Y."/>
            <person name="Ozawa T."/>
            <person name="Mikayama T."/>
            <person name="Iijima H."/>
            <person name="Ishida A."/>
            <person name="Sato Y."/>
            <person name="Tamai Y."/>
            <person name="Tanaka J."/>
            <person name="Ikenaga H."/>
        </authorList>
    </citation>
    <scope>NUCLEOTIDE SEQUENCE [MRNA]</scope>
    <source>
        <tissue>Pancreas</tissue>
    </source>
</reference>
<reference key="4">
    <citation type="journal article" date="2004" name="Nat. Genet.">
        <title>Complete sequencing and characterization of 21,243 full-length human cDNAs.</title>
        <authorList>
            <person name="Ota T."/>
            <person name="Suzuki Y."/>
            <person name="Nishikawa T."/>
            <person name="Otsuki T."/>
            <person name="Sugiyama T."/>
            <person name="Irie R."/>
            <person name="Wakamatsu A."/>
            <person name="Hayashi K."/>
            <person name="Sato H."/>
            <person name="Nagai K."/>
            <person name="Kimura K."/>
            <person name="Makita H."/>
            <person name="Sekine M."/>
            <person name="Obayashi M."/>
            <person name="Nishi T."/>
            <person name="Shibahara T."/>
            <person name="Tanaka T."/>
            <person name="Ishii S."/>
            <person name="Yamamoto J."/>
            <person name="Saito K."/>
            <person name="Kawai Y."/>
            <person name="Isono Y."/>
            <person name="Nakamura Y."/>
            <person name="Nagahari K."/>
            <person name="Murakami K."/>
            <person name="Yasuda T."/>
            <person name="Iwayanagi T."/>
            <person name="Wagatsuma M."/>
            <person name="Shiratori A."/>
            <person name="Sudo H."/>
            <person name="Hosoiri T."/>
            <person name="Kaku Y."/>
            <person name="Kodaira H."/>
            <person name="Kondo H."/>
            <person name="Sugawara M."/>
            <person name="Takahashi M."/>
            <person name="Kanda K."/>
            <person name="Yokoi T."/>
            <person name="Furuya T."/>
            <person name="Kikkawa E."/>
            <person name="Omura Y."/>
            <person name="Abe K."/>
            <person name="Kamihara K."/>
            <person name="Katsuta N."/>
            <person name="Sato K."/>
            <person name="Tanikawa M."/>
            <person name="Yamazaki M."/>
            <person name="Ninomiya K."/>
            <person name="Ishibashi T."/>
            <person name="Yamashita H."/>
            <person name="Murakawa K."/>
            <person name="Fujimori K."/>
            <person name="Tanai H."/>
            <person name="Kimata M."/>
            <person name="Watanabe M."/>
            <person name="Hiraoka S."/>
            <person name="Chiba Y."/>
            <person name="Ishida S."/>
            <person name="Ono Y."/>
            <person name="Takiguchi S."/>
            <person name="Watanabe S."/>
            <person name="Yosida M."/>
            <person name="Hotuta T."/>
            <person name="Kusano J."/>
            <person name="Kanehori K."/>
            <person name="Takahashi-Fujii A."/>
            <person name="Hara H."/>
            <person name="Tanase T.-O."/>
            <person name="Nomura Y."/>
            <person name="Togiya S."/>
            <person name="Komai F."/>
            <person name="Hara R."/>
            <person name="Takeuchi K."/>
            <person name="Arita M."/>
            <person name="Imose N."/>
            <person name="Musashino K."/>
            <person name="Yuuki H."/>
            <person name="Oshima A."/>
            <person name="Sasaki N."/>
            <person name="Aotsuka S."/>
            <person name="Yoshikawa Y."/>
            <person name="Matsunawa H."/>
            <person name="Ichihara T."/>
            <person name="Shiohata N."/>
            <person name="Sano S."/>
            <person name="Moriya S."/>
            <person name="Momiyama H."/>
            <person name="Satoh N."/>
            <person name="Takami S."/>
            <person name="Terashima Y."/>
            <person name="Suzuki O."/>
            <person name="Nakagawa S."/>
            <person name="Senoh A."/>
            <person name="Mizoguchi H."/>
            <person name="Goto Y."/>
            <person name="Shimizu F."/>
            <person name="Wakebe H."/>
            <person name="Hishigaki H."/>
            <person name="Watanabe T."/>
            <person name="Sugiyama A."/>
            <person name="Takemoto M."/>
            <person name="Kawakami B."/>
            <person name="Yamazaki M."/>
            <person name="Watanabe K."/>
            <person name="Kumagai A."/>
            <person name="Itakura S."/>
            <person name="Fukuzumi Y."/>
            <person name="Fujimori Y."/>
            <person name="Komiyama M."/>
            <person name="Tashiro H."/>
            <person name="Tanigami A."/>
            <person name="Fujiwara T."/>
            <person name="Ono T."/>
            <person name="Yamada K."/>
            <person name="Fujii Y."/>
            <person name="Ozaki K."/>
            <person name="Hirao M."/>
            <person name="Ohmori Y."/>
            <person name="Kawabata A."/>
            <person name="Hikiji T."/>
            <person name="Kobatake N."/>
            <person name="Inagaki H."/>
            <person name="Ikema Y."/>
            <person name="Okamoto S."/>
            <person name="Okitani R."/>
            <person name="Kawakami T."/>
            <person name="Noguchi S."/>
            <person name="Itoh T."/>
            <person name="Shigeta K."/>
            <person name="Senba T."/>
            <person name="Matsumura K."/>
            <person name="Nakajima Y."/>
            <person name="Mizuno T."/>
            <person name="Morinaga M."/>
            <person name="Sasaki M."/>
            <person name="Togashi T."/>
            <person name="Oyama M."/>
            <person name="Hata H."/>
            <person name="Watanabe M."/>
            <person name="Komatsu T."/>
            <person name="Mizushima-Sugano J."/>
            <person name="Satoh T."/>
            <person name="Shirai Y."/>
            <person name="Takahashi Y."/>
            <person name="Nakagawa K."/>
            <person name="Okumura K."/>
            <person name="Nagase T."/>
            <person name="Nomura N."/>
            <person name="Kikuchi H."/>
            <person name="Masuho Y."/>
            <person name="Yamashita R."/>
            <person name="Nakai K."/>
            <person name="Yada T."/>
            <person name="Nakamura Y."/>
            <person name="Ohara O."/>
            <person name="Isogai T."/>
            <person name="Sugano S."/>
        </authorList>
    </citation>
    <scope>NUCLEOTIDE SEQUENCE [LARGE SCALE MRNA]</scope>
    <source>
        <tissue>Pancreas</tissue>
        <tissue>Prostate</tissue>
    </source>
</reference>
<reference key="5">
    <citation type="journal article" date="2006" name="Nature">
        <title>The DNA sequence and biological annotation of human chromosome 1.</title>
        <authorList>
            <person name="Gregory S.G."/>
            <person name="Barlow K.F."/>
            <person name="McLay K.E."/>
            <person name="Kaul R."/>
            <person name="Swarbreck D."/>
            <person name="Dunham A."/>
            <person name="Scott C.E."/>
            <person name="Howe K.L."/>
            <person name="Woodfine K."/>
            <person name="Spencer C.C.A."/>
            <person name="Jones M.C."/>
            <person name="Gillson C."/>
            <person name="Searle S."/>
            <person name="Zhou Y."/>
            <person name="Kokocinski F."/>
            <person name="McDonald L."/>
            <person name="Evans R."/>
            <person name="Phillips K."/>
            <person name="Atkinson A."/>
            <person name="Cooper R."/>
            <person name="Jones C."/>
            <person name="Hall R.E."/>
            <person name="Andrews T.D."/>
            <person name="Lloyd C."/>
            <person name="Ainscough R."/>
            <person name="Almeida J.P."/>
            <person name="Ambrose K.D."/>
            <person name="Anderson F."/>
            <person name="Andrew R.W."/>
            <person name="Ashwell R.I.S."/>
            <person name="Aubin K."/>
            <person name="Babbage A.K."/>
            <person name="Bagguley C.L."/>
            <person name="Bailey J."/>
            <person name="Beasley H."/>
            <person name="Bethel G."/>
            <person name="Bird C.P."/>
            <person name="Bray-Allen S."/>
            <person name="Brown J.Y."/>
            <person name="Brown A.J."/>
            <person name="Buckley D."/>
            <person name="Burton J."/>
            <person name="Bye J."/>
            <person name="Carder C."/>
            <person name="Chapman J.C."/>
            <person name="Clark S.Y."/>
            <person name="Clarke G."/>
            <person name="Clee C."/>
            <person name="Cobley V."/>
            <person name="Collier R.E."/>
            <person name="Corby N."/>
            <person name="Coville G.J."/>
            <person name="Davies J."/>
            <person name="Deadman R."/>
            <person name="Dunn M."/>
            <person name="Earthrowl M."/>
            <person name="Ellington A.G."/>
            <person name="Errington H."/>
            <person name="Frankish A."/>
            <person name="Frankland J."/>
            <person name="French L."/>
            <person name="Garner P."/>
            <person name="Garnett J."/>
            <person name="Gay L."/>
            <person name="Ghori M.R.J."/>
            <person name="Gibson R."/>
            <person name="Gilby L.M."/>
            <person name="Gillett W."/>
            <person name="Glithero R.J."/>
            <person name="Grafham D.V."/>
            <person name="Griffiths C."/>
            <person name="Griffiths-Jones S."/>
            <person name="Grocock R."/>
            <person name="Hammond S."/>
            <person name="Harrison E.S.I."/>
            <person name="Hart E."/>
            <person name="Haugen E."/>
            <person name="Heath P.D."/>
            <person name="Holmes S."/>
            <person name="Holt K."/>
            <person name="Howden P.J."/>
            <person name="Hunt A.R."/>
            <person name="Hunt S.E."/>
            <person name="Hunter G."/>
            <person name="Isherwood J."/>
            <person name="James R."/>
            <person name="Johnson C."/>
            <person name="Johnson D."/>
            <person name="Joy A."/>
            <person name="Kay M."/>
            <person name="Kershaw J.K."/>
            <person name="Kibukawa M."/>
            <person name="Kimberley A.M."/>
            <person name="King A."/>
            <person name="Knights A.J."/>
            <person name="Lad H."/>
            <person name="Laird G."/>
            <person name="Lawlor S."/>
            <person name="Leongamornlert D.A."/>
            <person name="Lloyd D.M."/>
            <person name="Loveland J."/>
            <person name="Lovell J."/>
            <person name="Lush M.J."/>
            <person name="Lyne R."/>
            <person name="Martin S."/>
            <person name="Mashreghi-Mohammadi M."/>
            <person name="Matthews L."/>
            <person name="Matthews N.S.W."/>
            <person name="McLaren S."/>
            <person name="Milne S."/>
            <person name="Mistry S."/>
            <person name="Moore M.J.F."/>
            <person name="Nickerson T."/>
            <person name="O'Dell C.N."/>
            <person name="Oliver K."/>
            <person name="Palmeiri A."/>
            <person name="Palmer S.A."/>
            <person name="Parker A."/>
            <person name="Patel D."/>
            <person name="Pearce A.V."/>
            <person name="Peck A.I."/>
            <person name="Pelan S."/>
            <person name="Phelps K."/>
            <person name="Phillimore B.J."/>
            <person name="Plumb R."/>
            <person name="Rajan J."/>
            <person name="Raymond C."/>
            <person name="Rouse G."/>
            <person name="Saenphimmachak C."/>
            <person name="Sehra H.K."/>
            <person name="Sheridan E."/>
            <person name="Shownkeen R."/>
            <person name="Sims S."/>
            <person name="Skuce C.D."/>
            <person name="Smith M."/>
            <person name="Steward C."/>
            <person name="Subramanian S."/>
            <person name="Sycamore N."/>
            <person name="Tracey A."/>
            <person name="Tromans A."/>
            <person name="Van Helmond Z."/>
            <person name="Wall M."/>
            <person name="Wallis J.M."/>
            <person name="White S."/>
            <person name="Whitehead S.L."/>
            <person name="Wilkinson J.E."/>
            <person name="Willey D.L."/>
            <person name="Williams H."/>
            <person name="Wilming L."/>
            <person name="Wray P.W."/>
            <person name="Wu Z."/>
            <person name="Coulson A."/>
            <person name="Vaudin M."/>
            <person name="Sulston J.E."/>
            <person name="Durbin R.M."/>
            <person name="Hubbard T."/>
            <person name="Wooster R."/>
            <person name="Dunham I."/>
            <person name="Carter N.P."/>
            <person name="McVean G."/>
            <person name="Ross M.T."/>
            <person name="Harrow J."/>
            <person name="Olson M.V."/>
            <person name="Beck S."/>
            <person name="Rogers J."/>
            <person name="Bentley D.R."/>
        </authorList>
    </citation>
    <scope>NUCLEOTIDE SEQUENCE [LARGE SCALE GENOMIC DNA]</scope>
</reference>
<reference key="6">
    <citation type="submission" date="2005-07" db="EMBL/GenBank/DDBJ databases">
        <authorList>
            <person name="Mural R.J."/>
            <person name="Istrail S."/>
            <person name="Sutton G."/>
            <person name="Florea L."/>
            <person name="Halpern A.L."/>
            <person name="Mobarry C.M."/>
            <person name="Lippert R."/>
            <person name="Walenz B."/>
            <person name="Shatkay H."/>
            <person name="Dew I."/>
            <person name="Miller J.R."/>
            <person name="Flanigan M.J."/>
            <person name="Edwards N.J."/>
            <person name="Bolanos R."/>
            <person name="Fasulo D."/>
            <person name="Halldorsson B.V."/>
            <person name="Hannenhalli S."/>
            <person name="Turner R."/>
            <person name="Yooseph S."/>
            <person name="Lu F."/>
            <person name="Nusskern D.R."/>
            <person name="Shue B.C."/>
            <person name="Zheng X.H."/>
            <person name="Zhong F."/>
            <person name="Delcher A.L."/>
            <person name="Huson D.H."/>
            <person name="Kravitz S.A."/>
            <person name="Mouchard L."/>
            <person name="Reinert K."/>
            <person name="Remington K.A."/>
            <person name="Clark A.G."/>
            <person name="Waterman M.S."/>
            <person name="Eichler E.E."/>
            <person name="Adams M.D."/>
            <person name="Hunkapiller M.W."/>
            <person name="Myers E.W."/>
            <person name="Venter J.C."/>
        </authorList>
    </citation>
    <scope>NUCLEOTIDE SEQUENCE [LARGE SCALE GENOMIC DNA]</scope>
</reference>
<reference key="7">
    <citation type="journal article" date="2004" name="Genome Res.">
        <title>The status, quality, and expansion of the NIH full-length cDNA project: the Mammalian Gene Collection (MGC).</title>
        <authorList>
            <consortium name="The MGC Project Team"/>
        </authorList>
    </citation>
    <scope>NUCLEOTIDE SEQUENCE [LARGE SCALE MRNA]</scope>
    <source>
        <tissue>Pancreas</tissue>
    </source>
</reference>
<reference key="8">
    <citation type="journal article" date="1990" name="FEBS Lett.">
        <title>Further studies on the human pancreatic binary complexes involving procarboxypeptidase A.</title>
        <authorList>
            <person name="Moulard M."/>
            <person name="Michon T."/>
            <person name="Kerfelec B."/>
            <person name="Chapus C."/>
        </authorList>
    </citation>
    <scope>PROTEIN SEQUENCE OF 18-50</scope>
    <scope>INTERACTION WITH CPA1</scope>
</reference>
<reference key="9">
    <citation type="journal article" date="2000" name="J. Invest. Dermatol.">
        <title>Human elastase 1: evidence for expression in the skin and the identification of a frequent frameshift polymorphism.</title>
        <authorList>
            <person name="Talas U."/>
            <person name="Dunlop J."/>
            <person name="Khalaf S."/>
            <person name="Leigh I.M."/>
            <person name="Kelsell D.P."/>
        </authorList>
    </citation>
    <scope>TISSUE SPECIFICITY</scope>
</reference>
<reference key="10">
    <citation type="journal article" date="2019" name="Nat. Genet.">
        <title>CELA2A mutations predispose to early-onset atherosclerosis and metabolic syndrome and affect plasma insulin and platelet activation.</title>
        <authorList>
            <person name="Esteghamat F."/>
            <person name="Broughton J.S."/>
            <person name="Smith E."/>
            <person name="Cardone R."/>
            <person name="Tyagi T."/>
            <person name="Guerra M."/>
            <person name="Szabo A."/>
            <person name="Ugwu N."/>
            <person name="Mani M.V."/>
            <person name="Azari B."/>
            <person name="Kayingo G."/>
            <person name="Chung S."/>
            <person name="Fathzadeh M."/>
            <person name="Weiss E."/>
            <person name="Bender J."/>
            <person name="Mane S."/>
            <person name="Lifton R.P."/>
            <person name="Adeniran A."/>
            <person name="Nathanson M.H."/>
            <person name="Gorelick F.S."/>
            <person name="Hwa J."/>
            <person name="Sahin-Toth M."/>
            <person name="Belfort-DeAguiar R."/>
            <person name="Kibbey R.G."/>
            <person name="Mani A."/>
        </authorList>
    </citation>
    <scope>INVOLVEMENT IN AOMS4</scope>
    <scope>FUNCTION</scope>
    <scope>VARIANTS AOMS4 MET-70; MET-85 AND ASN-121</scope>
    <scope>CHARACTERIZATION OF VARIANTS AOMS4 MET-70; MET-85 AND ASN-121</scope>
    <scope>INTERACTION WITH SERPINA1</scope>
    <scope>CATALYTIC ACTIVITY</scope>
    <scope>SUBCELLULAR LOCATION</scope>
</reference>
<name>CEL2A_HUMAN</name>
<feature type="signal peptide">
    <location>
        <begin position="1"/>
        <end position="16"/>
    </location>
</feature>
<feature type="propeptide" id="PRO_0000027693" description="Activation peptide">
    <location>
        <begin position="17"/>
        <end position="28"/>
    </location>
</feature>
<feature type="chain" id="PRO_0000027694" description="Chymotrypsin-like elastase family member 2A">
    <location>
        <begin position="29"/>
        <end position="269"/>
    </location>
</feature>
<feature type="domain" description="Peptidase S1" evidence="2">
    <location>
        <begin position="29"/>
        <end position="267"/>
    </location>
</feature>
<feature type="active site" description="Charge relay system" evidence="1">
    <location>
        <position position="73"/>
    </location>
</feature>
<feature type="active site" description="Charge relay system" evidence="1">
    <location>
        <position position="121"/>
    </location>
</feature>
<feature type="active site" description="Charge relay system" evidence="1">
    <location>
        <position position="216"/>
    </location>
</feature>
<feature type="disulfide bond" evidence="2">
    <location>
        <begin position="58"/>
        <end position="74"/>
    </location>
</feature>
<feature type="disulfide bond" evidence="2">
    <location>
        <begin position="155"/>
        <end position="222"/>
    </location>
</feature>
<feature type="disulfide bond" evidence="2">
    <location>
        <begin position="186"/>
        <end position="202"/>
    </location>
</feature>
<feature type="disulfide bond" evidence="2">
    <location>
        <begin position="212"/>
        <end position="243"/>
    </location>
</feature>
<feature type="sequence variant" id="VAR_083326" description="In AOMS4; strongly decreased elastase activity; abolishes interaction with SERPINA1; impaired insulin degradation; increased platelet aggregation; dbSNP:rs372947070." evidence="5">
    <original>T</original>
    <variation>M</variation>
    <location>
        <position position="70"/>
    </location>
</feature>
<feature type="sequence variant" id="VAR_083327" description="In AOMS4; uncertain significance; strongly decreased elastase activity; no effect on interaction with SERPINA1; no effect on insulin degradation; increased platelet aggregation; dbSNP:rs558493952." evidence="5">
    <original>L</original>
    <variation>M</variation>
    <location>
        <position position="85"/>
    </location>
</feature>
<feature type="sequence variant" id="VAR_083328" description="In AOMS4; strongly decreased elastase activity; abolishes interaction with SERPINA1; increased levels in plasma; impaired insulin degradation; increased platelet aggregation; dbSNP:rs1352544800." evidence="5">
    <original>D</original>
    <variation>N</variation>
    <location>
        <position position="121"/>
    </location>
</feature>
<feature type="sequence variant" id="VAR_051837" description="In dbSNP:rs2303193.">
    <original>N</original>
    <variation>S</variation>
    <location>
        <position position="257"/>
    </location>
</feature>
<feature type="sequence conflict" description="In Ref. 3; BAA00165." evidence="6" ref="3">
    <original>C</original>
    <variation>V</variation>
    <location>
        <position position="202"/>
    </location>
</feature>
<proteinExistence type="evidence at protein level"/>